<organism>
    <name type="scientific">Methanothrix thermoacetophila (strain DSM 6194 / JCM 14653 / NBRC 101360 / PT)</name>
    <name type="common">Methanosaeta thermophila</name>
    <dbReference type="NCBI Taxonomy" id="349307"/>
    <lineage>
        <taxon>Archaea</taxon>
        <taxon>Methanobacteriati</taxon>
        <taxon>Methanobacteriota</taxon>
        <taxon>Stenosarchaea group</taxon>
        <taxon>Methanomicrobia</taxon>
        <taxon>Methanotrichales</taxon>
        <taxon>Methanotrichaceae</taxon>
        <taxon>Methanothrix</taxon>
    </lineage>
</organism>
<keyword id="KW-1003">Cell membrane</keyword>
<keyword id="KW-0169">Cobalamin biosynthesis</keyword>
<keyword id="KW-0472">Membrane</keyword>
<keyword id="KW-1185">Reference proteome</keyword>
<keyword id="KW-0812">Transmembrane</keyword>
<keyword id="KW-1133">Transmembrane helix</keyword>
<feature type="chain" id="PRO_1000116429" description="Probable cobalamin biosynthesis protein CobD">
    <location>
        <begin position="1"/>
        <end position="316"/>
    </location>
</feature>
<feature type="transmembrane region" description="Helical" evidence="1">
    <location>
        <begin position="1"/>
        <end position="21"/>
    </location>
</feature>
<feature type="transmembrane region" description="Helical" evidence="1">
    <location>
        <begin position="50"/>
        <end position="70"/>
    </location>
</feature>
<feature type="transmembrane region" description="Helical" evidence="1">
    <location>
        <begin position="89"/>
        <end position="109"/>
    </location>
</feature>
<feature type="transmembrane region" description="Helical" evidence="1">
    <location>
        <begin position="165"/>
        <end position="185"/>
    </location>
</feature>
<feature type="transmembrane region" description="Helical" evidence="1">
    <location>
        <begin position="294"/>
        <end position="314"/>
    </location>
</feature>
<gene>
    <name evidence="1" type="primary">cobD</name>
    <name type="ordered locus">Mthe_0295</name>
</gene>
<name>COBD_METTP</name>
<protein>
    <recommendedName>
        <fullName evidence="1">Probable cobalamin biosynthesis protein CobD</fullName>
    </recommendedName>
</protein>
<evidence type="ECO:0000255" key="1">
    <source>
        <dbReference type="HAMAP-Rule" id="MF_00024"/>
    </source>
</evidence>
<sequence length="316" mass="33940">MITEIFPFSVLILALLIDIVLGEPPAALHPVVIIGTAVDRLRRMMPRRKISGMIISVLVISGAVLAGFALIRIAYATGSLAGSSEMGDILALIISSYLLKSTFAFKSLIMTSREIGNLIDEDLDAAKHLLPALVSRNPLNLTHAQARSAVIESLSENYVDTIVSPLFYYVLFSCAGLGVEAALAFKAVSTMDSMLGYKSDDLREIGYVPARLDDILNWIPARLSLPLIMIASPRKSMDILKACMRYHSVTPSPNSGWPMAAAAGALGTRMAKPGVYTILDEGRDPESEDVSSAISLIGRAMVLAALLSALLLILLR</sequence>
<proteinExistence type="inferred from homology"/>
<comment type="function">
    <text evidence="1">Converts cobyric acid to cobinamide by the addition of aminopropanol on the F carboxylic group.</text>
</comment>
<comment type="pathway">
    <text evidence="1">Cofactor biosynthesis; adenosylcobalamin biosynthesis.</text>
</comment>
<comment type="subcellular location">
    <subcellularLocation>
        <location evidence="1">Cell membrane</location>
        <topology evidence="1">Multi-pass membrane protein</topology>
    </subcellularLocation>
</comment>
<comment type="similarity">
    <text evidence="1">Belongs to the CobD/CbiB family.</text>
</comment>
<reference key="1">
    <citation type="submission" date="2006-10" db="EMBL/GenBank/DDBJ databases">
        <title>Complete sequence of Methanosaeta thermophila PT.</title>
        <authorList>
            <consortium name="US DOE Joint Genome Institute"/>
            <person name="Copeland A."/>
            <person name="Lucas S."/>
            <person name="Lapidus A."/>
            <person name="Barry K."/>
            <person name="Detter J.C."/>
            <person name="Glavina del Rio T."/>
            <person name="Hammon N."/>
            <person name="Israni S."/>
            <person name="Pitluck S."/>
            <person name="Chain P."/>
            <person name="Malfatti S."/>
            <person name="Shin M."/>
            <person name="Vergez L."/>
            <person name="Schmutz J."/>
            <person name="Larimer F."/>
            <person name="Land M."/>
            <person name="Hauser L."/>
            <person name="Kyrpides N."/>
            <person name="Kim E."/>
            <person name="Smith K.S."/>
            <person name="Ingram-Smith C."/>
            <person name="Richardson P."/>
        </authorList>
    </citation>
    <scope>NUCLEOTIDE SEQUENCE [LARGE SCALE GENOMIC DNA]</scope>
    <source>
        <strain>DSM 6194 / JCM 14653 / NBRC 101360 / PT</strain>
    </source>
</reference>
<accession>A0B5W6</accession>
<dbReference type="EMBL" id="CP000477">
    <property type="protein sequence ID" value="ABK14090.1"/>
    <property type="molecule type" value="Genomic_DNA"/>
</dbReference>
<dbReference type="RefSeq" id="WP_011695489.1">
    <property type="nucleotide sequence ID" value="NC_008553.1"/>
</dbReference>
<dbReference type="STRING" id="349307.Mthe_0295"/>
<dbReference type="GeneID" id="4462807"/>
<dbReference type="KEGG" id="mtp:Mthe_0295"/>
<dbReference type="HOGENOM" id="CLU_054212_0_2_2"/>
<dbReference type="OrthoDB" id="46105at2157"/>
<dbReference type="UniPathway" id="UPA00148"/>
<dbReference type="Proteomes" id="UP000000674">
    <property type="component" value="Chromosome"/>
</dbReference>
<dbReference type="GO" id="GO:0005886">
    <property type="term" value="C:plasma membrane"/>
    <property type="evidence" value="ECO:0007669"/>
    <property type="project" value="UniProtKB-SubCell"/>
</dbReference>
<dbReference type="GO" id="GO:0015420">
    <property type="term" value="F:ABC-type vitamin B12 transporter activity"/>
    <property type="evidence" value="ECO:0007669"/>
    <property type="project" value="UniProtKB-UniRule"/>
</dbReference>
<dbReference type="GO" id="GO:0048472">
    <property type="term" value="F:threonine-phosphate decarboxylase activity"/>
    <property type="evidence" value="ECO:0007669"/>
    <property type="project" value="InterPro"/>
</dbReference>
<dbReference type="GO" id="GO:0009236">
    <property type="term" value="P:cobalamin biosynthetic process"/>
    <property type="evidence" value="ECO:0007669"/>
    <property type="project" value="UniProtKB-UniRule"/>
</dbReference>
<dbReference type="HAMAP" id="MF_00024">
    <property type="entry name" value="CobD_CbiB"/>
    <property type="match status" value="1"/>
</dbReference>
<dbReference type="InterPro" id="IPR004485">
    <property type="entry name" value="Cobalamin_biosynth_CobD/CbiB"/>
</dbReference>
<dbReference type="NCBIfam" id="TIGR00380">
    <property type="entry name" value="cobal_cbiB"/>
    <property type="match status" value="1"/>
</dbReference>
<dbReference type="NCBIfam" id="NF002281">
    <property type="entry name" value="PRK01209.2-5"/>
    <property type="match status" value="1"/>
</dbReference>
<dbReference type="PANTHER" id="PTHR34308">
    <property type="entry name" value="COBALAMIN BIOSYNTHESIS PROTEIN CBIB"/>
    <property type="match status" value="1"/>
</dbReference>
<dbReference type="PANTHER" id="PTHR34308:SF1">
    <property type="entry name" value="COBALAMIN BIOSYNTHESIS PROTEIN CBIB"/>
    <property type="match status" value="1"/>
</dbReference>
<dbReference type="Pfam" id="PF03186">
    <property type="entry name" value="CobD_Cbib"/>
    <property type="match status" value="1"/>
</dbReference>